<keyword id="KW-0067">ATP-binding</keyword>
<keyword id="KW-0342">GTP-binding</keyword>
<keyword id="KW-0547">Nucleotide-binding</keyword>
<keyword id="KW-1185">Reference proteome</keyword>
<keyword id="KW-0694">RNA-binding</keyword>
<accession>B2U1X2</accession>
<comment type="function">
    <text evidence="1">Modulates the synthesis of GlmS, by affecting the processing and stability of the regulatory small RNA GlmZ. When glucosamine-6-phosphate (GlcN6P) concentrations are high in the cell, RapZ binds GlmZ and targets it to cleavage by RNase E. Consequently, GlmZ is inactivated and unable to activate GlmS synthesis. Under low GlcN6P concentrations, RapZ is sequestered and inactivated by an other regulatory small RNA, GlmY, preventing GlmZ degradation and leading to synthesis of GlmS.</text>
</comment>
<comment type="subunit">
    <text evidence="1">Homotrimer.</text>
</comment>
<comment type="similarity">
    <text evidence="1">Belongs to the RapZ-like family. RapZ subfamily.</text>
</comment>
<dbReference type="EMBL" id="CP001063">
    <property type="protein sequence ID" value="ACD08378.1"/>
    <property type="molecule type" value="Genomic_DNA"/>
</dbReference>
<dbReference type="RefSeq" id="WP_000243741.1">
    <property type="nucleotide sequence ID" value="NC_010658.1"/>
</dbReference>
<dbReference type="SMR" id="B2U1X2"/>
<dbReference type="STRING" id="344609.SbBS512_E3565"/>
<dbReference type="GeneID" id="93778776"/>
<dbReference type="KEGG" id="sbc:SbBS512_E3565"/>
<dbReference type="HOGENOM" id="CLU_059558_1_1_6"/>
<dbReference type="Proteomes" id="UP000001030">
    <property type="component" value="Chromosome"/>
</dbReference>
<dbReference type="GO" id="GO:0005524">
    <property type="term" value="F:ATP binding"/>
    <property type="evidence" value="ECO:0007669"/>
    <property type="project" value="UniProtKB-UniRule"/>
</dbReference>
<dbReference type="GO" id="GO:0005525">
    <property type="term" value="F:GTP binding"/>
    <property type="evidence" value="ECO:0007669"/>
    <property type="project" value="UniProtKB-UniRule"/>
</dbReference>
<dbReference type="GO" id="GO:0003723">
    <property type="term" value="F:RNA binding"/>
    <property type="evidence" value="ECO:0007669"/>
    <property type="project" value="UniProtKB-KW"/>
</dbReference>
<dbReference type="Gene3D" id="3.40.50.300">
    <property type="entry name" value="P-loop containing nucleotide triphosphate hydrolases"/>
    <property type="match status" value="1"/>
</dbReference>
<dbReference type="HAMAP" id="MF_00636">
    <property type="entry name" value="RapZ_like"/>
    <property type="match status" value="1"/>
</dbReference>
<dbReference type="InterPro" id="IPR027417">
    <property type="entry name" value="P-loop_NTPase"/>
</dbReference>
<dbReference type="InterPro" id="IPR005337">
    <property type="entry name" value="RapZ-like"/>
</dbReference>
<dbReference type="InterPro" id="IPR053930">
    <property type="entry name" value="RapZ-like_N"/>
</dbReference>
<dbReference type="InterPro" id="IPR053931">
    <property type="entry name" value="RapZ_C"/>
</dbReference>
<dbReference type="NCBIfam" id="NF003828">
    <property type="entry name" value="PRK05416.1"/>
    <property type="match status" value="1"/>
</dbReference>
<dbReference type="PANTHER" id="PTHR30448">
    <property type="entry name" value="RNASE ADAPTER PROTEIN RAPZ"/>
    <property type="match status" value="1"/>
</dbReference>
<dbReference type="PANTHER" id="PTHR30448:SF0">
    <property type="entry name" value="RNASE ADAPTER PROTEIN RAPZ"/>
    <property type="match status" value="1"/>
</dbReference>
<dbReference type="Pfam" id="PF22740">
    <property type="entry name" value="PapZ_C"/>
    <property type="match status" value="1"/>
</dbReference>
<dbReference type="Pfam" id="PF03668">
    <property type="entry name" value="RapZ-like_N"/>
    <property type="match status" value="1"/>
</dbReference>
<dbReference type="PIRSF" id="PIRSF005052">
    <property type="entry name" value="P-loopkin"/>
    <property type="match status" value="1"/>
</dbReference>
<dbReference type="SUPFAM" id="SSF52540">
    <property type="entry name" value="P-loop containing nucleoside triphosphate hydrolases"/>
    <property type="match status" value="1"/>
</dbReference>
<sequence>MVLMIVSGRSGSGKSVALRALEDMGFYCVDNLPVVLLPDLARTLADREISAAVSIDVRNMPESPEIFEQAMSNLPDAFSPQLLFLDADRNTLIRRYSDTRRLHPLSSKNLSLESAIDKESDLLEPLRSRADLIVDTSEMSVHELAEMLRTRLLGKRERELTMVFESFGFKHGIPIDADYVFDVRFLPNPHWDPKLRPMTGLDKPVAAFLDRHTEVHNFIYQTRSYLELWLPMLETNNRSYLTVAIGCTGGKHRSVYIAEQLADYFRSRGKNVQSRHRTLEKRKP</sequence>
<feature type="chain" id="PRO_1000130785" description="RNase adapter protein RapZ">
    <location>
        <begin position="1"/>
        <end position="284"/>
    </location>
</feature>
<feature type="region of interest" description="RNA-binding" evidence="1">
    <location>
        <begin position="266"/>
        <end position="284"/>
    </location>
</feature>
<feature type="binding site" evidence="1">
    <location>
        <begin position="8"/>
        <end position="15"/>
    </location>
    <ligand>
        <name>ATP</name>
        <dbReference type="ChEBI" id="CHEBI:30616"/>
    </ligand>
</feature>
<feature type="binding site" evidence="1">
    <location>
        <begin position="56"/>
        <end position="59"/>
    </location>
    <ligand>
        <name>GTP</name>
        <dbReference type="ChEBI" id="CHEBI:37565"/>
    </ligand>
</feature>
<reference key="1">
    <citation type="submission" date="2008-05" db="EMBL/GenBank/DDBJ databases">
        <title>Complete sequence of Shigella boydii serotype 18 strain BS512.</title>
        <authorList>
            <person name="Rasko D.A."/>
            <person name="Rosovitz M."/>
            <person name="Maurelli A.T."/>
            <person name="Myers G."/>
            <person name="Seshadri R."/>
            <person name="Cer R."/>
            <person name="Jiang L."/>
            <person name="Ravel J."/>
            <person name="Sebastian Y."/>
        </authorList>
    </citation>
    <scope>NUCLEOTIDE SEQUENCE [LARGE SCALE GENOMIC DNA]</scope>
    <source>
        <strain>CDC 3083-94 / BS512</strain>
    </source>
</reference>
<proteinExistence type="inferred from homology"/>
<name>RAPZ_SHIB3</name>
<organism>
    <name type="scientific">Shigella boydii serotype 18 (strain CDC 3083-94 / BS512)</name>
    <dbReference type="NCBI Taxonomy" id="344609"/>
    <lineage>
        <taxon>Bacteria</taxon>
        <taxon>Pseudomonadati</taxon>
        <taxon>Pseudomonadota</taxon>
        <taxon>Gammaproteobacteria</taxon>
        <taxon>Enterobacterales</taxon>
        <taxon>Enterobacteriaceae</taxon>
        <taxon>Shigella</taxon>
    </lineage>
</organism>
<evidence type="ECO:0000255" key="1">
    <source>
        <dbReference type="HAMAP-Rule" id="MF_00636"/>
    </source>
</evidence>
<gene>
    <name evidence="1" type="primary">rapZ</name>
    <name type="ordered locus">SbBS512_E3565</name>
</gene>
<protein>
    <recommendedName>
        <fullName evidence="1">RNase adapter protein RapZ</fullName>
    </recommendedName>
</protein>